<accession>P9WGC2</accession>
<accession>L0TCC5</accession>
<accession>P67123</accession>
<accession>P96889</accession>
<feature type="chain" id="PRO_0000428387" description="Uncharacterized SufE-like protein MT3383">
    <location>
        <begin position="1"/>
        <end position="143"/>
    </location>
</feature>
<sequence>MTAPASLPAPLAEVVSDFAEVQGQDKLRLLLEFANELPALPSHLAESAMEPVPECQSPLFLHVDASDPNRVRLHFSAPAEAPTTRGFASILAAGLDEQPAADILAVPEDFYTELGLAALISPLRLRGMSAMLARIKRRLREAD</sequence>
<evidence type="ECO:0000305" key="1"/>
<keyword id="KW-1185">Reference proteome</keyword>
<gene>
    <name type="ordered locus">MT3383</name>
</gene>
<protein>
    <recommendedName>
        <fullName>Uncharacterized SufE-like protein MT3383</fullName>
    </recommendedName>
</protein>
<dbReference type="EMBL" id="AE000516">
    <property type="protein sequence ID" value="AAK47726.1"/>
    <property type="molecule type" value="Genomic_DNA"/>
</dbReference>
<dbReference type="PIR" id="E70980">
    <property type="entry name" value="E70980"/>
</dbReference>
<dbReference type="RefSeq" id="WP_003417152.1">
    <property type="nucleotide sequence ID" value="NZ_KK341227.1"/>
</dbReference>
<dbReference type="SMR" id="P9WGC2"/>
<dbReference type="KEGG" id="mtc:MT3383"/>
<dbReference type="PATRIC" id="fig|83331.31.peg.3641"/>
<dbReference type="HOGENOM" id="CLU_124502_2_0_11"/>
<dbReference type="Proteomes" id="UP000001020">
    <property type="component" value="Chromosome"/>
</dbReference>
<dbReference type="Gene3D" id="3.90.1010.10">
    <property type="match status" value="1"/>
</dbReference>
<dbReference type="InterPro" id="IPR003808">
    <property type="entry name" value="Fe-S_metab-assoc_dom"/>
</dbReference>
<dbReference type="PANTHER" id="PTHR43597:SF5">
    <property type="entry name" value="SUFE-LIKE PROTEIN 2, CHLOROPLASTIC"/>
    <property type="match status" value="1"/>
</dbReference>
<dbReference type="PANTHER" id="PTHR43597">
    <property type="entry name" value="SULFUR ACCEPTOR PROTEIN CSDE"/>
    <property type="match status" value="1"/>
</dbReference>
<dbReference type="Pfam" id="PF02657">
    <property type="entry name" value="SufE"/>
    <property type="match status" value="1"/>
</dbReference>
<dbReference type="SUPFAM" id="SSF82649">
    <property type="entry name" value="SufE/NifU"/>
    <property type="match status" value="1"/>
</dbReference>
<comment type="similarity">
    <text evidence="1">Belongs to the SufE family.</text>
</comment>
<reference key="1">
    <citation type="journal article" date="2002" name="J. Bacteriol.">
        <title>Whole-genome comparison of Mycobacterium tuberculosis clinical and laboratory strains.</title>
        <authorList>
            <person name="Fleischmann R.D."/>
            <person name="Alland D."/>
            <person name="Eisen J.A."/>
            <person name="Carpenter L."/>
            <person name="White O."/>
            <person name="Peterson J.D."/>
            <person name="DeBoy R.T."/>
            <person name="Dodson R.J."/>
            <person name="Gwinn M.L."/>
            <person name="Haft D.H."/>
            <person name="Hickey E.K."/>
            <person name="Kolonay J.F."/>
            <person name="Nelson W.C."/>
            <person name="Umayam L.A."/>
            <person name="Ermolaeva M.D."/>
            <person name="Salzberg S.L."/>
            <person name="Delcher A."/>
            <person name="Utterback T.R."/>
            <person name="Weidman J.F."/>
            <person name="Khouri H.M."/>
            <person name="Gill J."/>
            <person name="Mikula A."/>
            <person name="Bishai W."/>
            <person name="Jacobs W.R. Jr."/>
            <person name="Venter J.C."/>
            <person name="Fraser C.M."/>
        </authorList>
    </citation>
    <scope>NUCLEOTIDE SEQUENCE [LARGE SCALE GENOMIC DNA]</scope>
    <source>
        <strain>CDC 1551 / Oshkosh</strain>
    </source>
</reference>
<proteinExistence type="inferred from homology"/>
<organism>
    <name type="scientific">Mycobacterium tuberculosis (strain CDC 1551 / Oshkosh)</name>
    <dbReference type="NCBI Taxonomy" id="83331"/>
    <lineage>
        <taxon>Bacteria</taxon>
        <taxon>Bacillati</taxon>
        <taxon>Actinomycetota</taxon>
        <taxon>Actinomycetes</taxon>
        <taxon>Mycobacteriales</taxon>
        <taxon>Mycobacteriaceae</taxon>
        <taxon>Mycobacterium</taxon>
        <taxon>Mycobacterium tuberculosis complex</taxon>
    </lineage>
</organism>
<name>Y3284_MYCTO</name>